<gene>
    <name evidence="1" type="primary">MEF1</name>
    <name type="ordered locus">ABR227C</name>
</gene>
<reference key="1">
    <citation type="journal article" date="2004" name="Science">
        <title>The Ashbya gossypii genome as a tool for mapping the ancient Saccharomyces cerevisiae genome.</title>
        <authorList>
            <person name="Dietrich F.S."/>
            <person name="Voegeli S."/>
            <person name="Brachat S."/>
            <person name="Lerch A."/>
            <person name="Gates K."/>
            <person name="Steiner S."/>
            <person name="Mohr C."/>
            <person name="Poehlmann R."/>
            <person name="Luedi P."/>
            <person name="Choi S."/>
            <person name="Wing R.A."/>
            <person name="Flavier A."/>
            <person name="Gaffney T.D."/>
            <person name="Philippsen P."/>
        </authorList>
    </citation>
    <scope>NUCLEOTIDE SEQUENCE [LARGE SCALE GENOMIC DNA]</scope>
    <source>
        <strain>ATCC 10895 / CBS 109.51 / FGSC 9923 / NRRL Y-1056</strain>
    </source>
</reference>
<reference key="2">
    <citation type="journal article" date="2013" name="G3 (Bethesda)">
        <title>Genomes of Ashbya fungi isolated from insects reveal four mating-type loci, numerous translocations, lack of transposons, and distinct gene duplications.</title>
        <authorList>
            <person name="Dietrich F.S."/>
            <person name="Voegeli S."/>
            <person name="Kuo S."/>
            <person name="Philippsen P."/>
        </authorList>
    </citation>
    <scope>GENOME REANNOTATION</scope>
    <scope>SEQUENCE REVISION TO 641 AND 715</scope>
    <source>
        <strain>ATCC 10895 / CBS 109.51 / FGSC 9923 / NRRL Y-1056</strain>
    </source>
</reference>
<accession>Q75CZ5</accession>
<keyword id="KW-0251">Elongation factor</keyword>
<keyword id="KW-0342">GTP-binding</keyword>
<keyword id="KW-0496">Mitochondrion</keyword>
<keyword id="KW-0547">Nucleotide-binding</keyword>
<keyword id="KW-0648">Protein biosynthesis</keyword>
<keyword id="KW-1185">Reference proteome</keyword>
<keyword id="KW-0809">Transit peptide</keyword>
<evidence type="ECO:0000255" key="1">
    <source>
        <dbReference type="HAMAP-Rule" id="MF_03061"/>
    </source>
</evidence>
<evidence type="ECO:0000305" key="2"/>
<dbReference type="EMBL" id="AE016815">
    <property type="protein sequence ID" value="AAS51000.2"/>
    <property type="molecule type" value="Genomic_DNA"/>
</dbReference>
<dbReference type="RefSeq" id="NP_983176.2">
    <property type="nucleotide sequence ID" value="NM_208529.2"/>
</dbReference>
<dbReference type="SMR" id="Q75CZ5"/>
<dbReference type="FunCoup" id="Q75CZ5">
    <property type="interactions" value="674"/>
</dbReference>
<dbReference type="STRING" id="284811.Q75CZ5"/>
<dbReference type="EnsemblFungi" id="AAS51000">
    <property type="protein sequence ID" value="AAS51000"/>
    <property type="gene ID" value="AGOS_ABR227C"/>
</dbReference>
<dbReference type="GeneID" id="4619286"/>
<dbReference type="KEGG" id="ago:AGOS_ABR227C"/>
<dbReference type="eggNOG" id="KOG0465">
    <property type="taxonomic scope" value="Eukaryota"/>
</dbReference>
<dbReference type="HOGENOM" id="CLU_002794_4_0_1"/>
<dbReference type="InParanoid" id="Q75CZ5"/>
<dbReference type="OMA" id="GQFAKVQ"/>
<dbReference type="OrthoDB" id="198619at2759"/>
<dbReference type="UniPathway" id="UPA00345"/>
<dbReference type="Proteomes" id="UP000000591">
    <property type="component" value="Chromosome II"/>
</dbReference>
<dbReference type="GO" id="GO:0005739">
    <property type="term" value="C:mitochondrion"/>
    <property type="evidence" value="ECO:0000318"/>
    <property type="project" value="GO_Central"/>
</dbReference>
<dbReference type="GO" id="GO:0005525">
    <property type="term" value="F:GTP binding"/>
    <property type="evidence" value="ECO:0007669"/>
    <property type="project" value="UniProtKB-UniRule"/>
</dbReference>
<dbReference type="GO" id="GO:0003924">
    <property type="term" value="F:GTPase activity"/>
    <property type="evidence" value="ECO:0000318"/>
    <property type="project" value="GO_Central"/>
</dbReference>
<dbReference type="GO" id="GO:0003746">
    <property type="term" value="F:translation elongation factor activity"/>
    <property type="evidence" value="ECO:0000318"/>
    <property type="project" value="GO_Central"/>
</dbReference>
<dbReference type="GO" id="GO:0070125">
    <property type="term" value="P:mitochondrial translational elongation"/>
    <property type="evidence" value="ECO:0000318"/>
    <property type="project" value="GO_Central"/>
</dbReference>
<dbReference type="CDD" id="cd01886">
    <property type="entry name" value="EF-G"/>
    <property type="match status" value="1"/>
</dbReference>
<dbReference type="CDD" id="cd16262">
    <property type="entry name" value="EFG_III"/>
    <property type="match status" value="1"/>
</dbReference>
<dbReference type="CDD" id="cd01434">
    <property type="entry name" value="EFG_mtEFG1_IV"/>
    <property type="match status" value="1"/>
</dbReference>
<dbReference type="CDD" id="cd04091">
    <property type="entry name" value="mtEFG1_II_like"/>
    <property type="match status" value="1"/>
</dbReference>
<dbReference type="FunFam" id="3.30.230.10:FF:000003">
    <property type="entry name" value="Elongation factor G"/>
    <property type="match status" value="1"/>
</dbReference>
<dbReference type="FunFam" id="3.30.70.870:FF:000001">
    <property type="entry name" value="Elongation factor G"/>
    <property type="match status" value="1"/>
</dbReference>
<dbReference type="FunFam" id="2.40.30.10:FF:000022">
    <property type="entry name" value="Elongation factor G, mitochondrial"/>
    <property type="match status" value="1"/>
</dbReference>
<dbReference type="FunFam" id="3.30.70.240:FF:000015">
    <property type="entry name" value="Elongation factor G, mitochondrial"/>
    <property type="match status" value="1"/>
</dbReference>
<dbReference type="FunFam" id="3.40.50.300:FF:000558">
    <property type="entry name" value="Elongation factor G, mitochondrial"/>
    <property type="match status" value="1"/>
</dbReference>
<dbReference type="Gene3D" id="3.30.230.10">
    <property type="match status" value="1"/>
</dbReference>
<dbReference type="Gene3D" id="3.30.70.240">
    <property type="match status" value="1"/>
</dbReference>
<dbReference type="Gene3D" id="3.30.70.870">
    <property type="entry name" value="Elongation Factor G (Translational Gtpase), domain 3"/>
    <property type="match status" value="1"/>
</dbReference>
<dbReference type="Gene3D" id="3.40.50.300">
    <property type="entry name" value="P-loop containing nucleotide triphosphate hydrolases"/>
    <property type="match status" value="1"/>
</dbReference>
<dbReference type="Gene3D" id="2.40.30.10">
    <property type="entry name" value="Translation factors"/>
    <property type="match status" value="1"/>
</dbReference>
<dbReference type="HAMAP" id="MF_00054_B">
    <property type="entry name" value="EF_G_EF_2_B"/>
    <property type="match status" value="1"/>
</dbReference>
<dbReference type="InterPro" id="IPR041095">
    <property type="entry name" value="EFG_II"/>
</dbReference>
<dbReference type="InterPro" id="IPR009022">
    <property type="entry name" value="EFG_III"/>
</dbReference>
<dbReference type="InterPro" id="IPR035647">
    <property type="entry name" value="EFG_III/V"/>
</dbReference>
<dbReference type="InterPro" id="IPR047872">
    <property type="entry name" value="EFG_IV"/>
</dbReference>
<dbReference type="InterPro" id="IPR000640">
    <property type="entry name" value="EFG_V-like"/>
</dbReference>
<dbReference type="InterPro" id="IPR004161">
    <property type="entry name" value="EFTu-like_2"/>
</dbReference>
<dbReference type="InterPro" id="IPR027417">
    <property type="entry name" value="P-loop_NTPase"/>
</dbReference>
<dbReference type="InterPro" id="IPR020568">
    <property type="entry name" value="Ribosomal_Su5_D2-typ_SF"/>
</dbReference>
<dbReference type="InterPro" id="IPR014721">
    <property type="entry name" value="Ribsml_uS5_D2-typ_fold_subgr"/>
</dbReference>
<dbReference type="InterPro" id="IPR005225">
    <property type="entry name" value="Small_GTP-bd"/>
</dbReference>
<dbReference type="InterPro" id="IPR000795">
    <property type="entry name" value="T_Tr_GTP-bd_dom"/>
</dbReference>
<dbReference type="InterPro" id="IPR009000">
    <property type="entry name" value="Transl_B-barrel_sf"/>
</dbReference>
<dbReference type="InterPro" id="IPR004540">
    <property type="entry name" value="Transl_elong_EFG/EF2"/>
</dbReference>
<dbReference type="InterPro" id="IPR005517">
    <property type="entry name" value="Transl_elong_EFG/EF2_IV"/>
</dbReference>
<dbReference type="NCBIfam" id="TIGR00484">
    <property type="entry name" value="EF-G"/>
    <property type="match status" value="1"/>
</dbReference>
<dbReference type="NCBIfam" id="NF009381">
    <property type="entry name" value="PRK12740.1-5"/>
    <property type="match status" value="1"/>
</dbReference>
<dbReference type="NCBIfam" id="TIGR00231">
    <property type="entry name" value="small_GTP"/>
    <property type="match status" value="1"/>
</dbReference>
<dbReference type="PANTHER" id="PTHR43636">
    <property type="entry name" value="ELONGATION FACTOR G, MITOCHONDRIAL"/>
    <property type="match status" value="1"/>
</dbReference>
<dbReference type="PANTHER" id="PTHR43636:SF2">
    <property type="entry name" value="ELONGATION FACTOR G, MITOCHONDRIAL"/>
    <property type="match status" value="1"/>
</dbReference>
<dbReference type="Pfam" id="PF00679">
    <property type="entry name" value="EFG_C"/>
    <property type="match status" value="1"/>
</dbReference>
<dbReference type="Pfam" id="PF14492">
    <property type="entry name" value="EFG_III"/>
    <property type="match status" value="1"/>
</dbReference>
<dbReference type="Pfam" id="PF03764">
    <property type="entry name" value="EFG_IV"/>
    <property type="match status" value="1"/>
</dbReference>
<dbReference type="Pfam" id="PF00009">
    <property type="entry name" value="GTP_EFTU"/>
    <property type="match status" value="1"/>
</dbReference>
<dbReference type="Pfam" id="PF03144">
    <property type="entry name" value="GTP_EFTU_D2"/>
    <property type="match status" value="1"/>
</dbReference>
<dbReference type="PRINTS" id="PR00315">
    <property type="entry name" value="ELONGATNFCT"/>
</dbReference>
<dbReference type="SMART" id="SM00838">
    <property type="entry name" value="EFG_C"/>
    <property type="match status" value="1"/>
</dbReference>
<dbReference type="SMART" id="SM00889">
    <property type="entry name" value="EFG_IV"/>
    <property type="match status" value="1"/>
</dbReference>
<dbReference type="SUPFAM" id="SSF54980">
    <property type="entry name" value="EF-G C-terminal domain-like"/>
    <property type="match status" value="2"/>
</dbReference>
<dbReference type="SUPFAM" id="SSF52540">
    <property type="entry name" value="P-loop containing nucleoside triphosphate hydrolases"/>
    <property type="match status" value="1"/>
</dbReference>
<dbReference type="SUPFAM" id="SSF54211">
    <property type="entry name" value="Ribosomal protein S5 domain 2-like"/>
    <property type="match status" value="1"/>
</dbReference>
<dbReference type="SUPFAM" id="SSF50447">
    <property type="entry name" value="Translation proteins"/>
    <property type="match status" value="1"/>
</dbReference>
<dbReference type="PROSITE" id="PS51722">
    <property type="entry name" value="G_TR_2"/>
    <property type="match status" value="1"/>
</dbReference>
<sequence length="757" mass="83929">MLERAALLHRLRLPAHSLPFIYNGALFGGAKRSFSATSKRCTYEEEKAVLDELKPQLTADDLKHSKLLRNIGVSAHIDSGKTTFTERVLYYTGRIKAIHEVRGRDSVGAKMDHMDLEREKGITIQSAATYCSWDKDQESYHFNLIDTPGHIDFTIEVERALRVLDGAVLVVCAVSGVQSQTVTVDRQMRRYNVPRVTFINKMDRMGADPFKAIQQINTKLRIPAAAVHVPIGSESDLCGVVDIINRVAIYNEGENGEVLRKGPVPEELQDLVEEKRLLLVETLADVDDEMAEIFLDEQEPTVQQIKDAIRRATIARKFTPVLMGSALANTGIQNVLDAIVDYLPEPSEVLNTALDVSNNETKVNLIPSSHHPFVGLAFKLEEGNYGQLTYIRVYQGKLKKGGYITNVRTGKKVKVSRLVRMHSNEMEDVNEIGAGEICATFGIDCSSGDTFTDGKLKYSMSSMYVPDAVISLSISPNSKDSATNFSKALNRFQKEDPTFRVRFDPESKQTIISGMGELHLEIYVERMRREYNVACTTGKPQVSYRESIQIPATFDYTHKKQSGGAGQYARVMGNLTPVANSSENTFTTAVVGGRIPDKYLAACAKGFEEVCEKGPLIGHKVLGINMLINDGAIHAVDSNELAFKTATTAAFVQSFMQAQPVVLEPIMTVTVTAPNEFQGNVITLLNKLQAVIQDTENGHDEFTMTSECSLNTMFGFATSLRASTQGKGEFSLEFKQYSPASPQLQKQLIEEYRKSKK</sequence>
<feature type="transit peptide" description="Mitochondrion" evidence="1">
    <location>
        <begin position="1"/>
        <end position="41"/>
    </location>
</feature>
<feature type="chain" id="PRO_0000385555" description="Elongation factor G, mitochondrial">
    <location>
        <begin position="42"/>
        <end position="757"/>
    </location>
</feature>
<feature type="domain" description="tr-type G">
    <location>
        <begin position="66"/>
        <end position="347"/>
    </location>
</feature>
<feature type="binding site" evidence="1">
    <location>
        <begin position="75"/>
        <end position="82"/>
    </location>
    <ligand>
        <name>GTP</name>
        <dbReference type="ChEBI" id="CHEBI:37565"/>
    </ligand>
</feature>
<feature type="binding site" evidence="1">
    <location>
        <begin position="146"/>
        <end position="150"/>
    </location>
    <ligand>
        <name>GTP</name>
        <dbReference type="ChEBI" id="CHEBI:37565"/>
    </ligand>
</feature>
<feature type="binding site" evidence="1">
    <location>
        <begin position="200"/>
        <end position="203"/>
    </location>
    <ligand>
        <name>GTP</name>
        <dbReference type="ChEBI" id="CHEBI:37565"/>
    </ligand>
</feature>
<comment type="function">
    <text evidence="1">Mitochondrial GTPase that catalyzes the GTP-dependent ribosomal translocation step during translation elongation. During this step, the ribosome changes from the pre-translocational (PRE) to the post-translocational (POST) state as the newly formed A-site-bound peptidyl-tRNA and P-site-bound deacylated tRNA move to the P and E sites, respectively. Catalyzes the coordinated movement of the two tRNA molecules, the mRNA and conformational changes in the ribosome.</text>
</comment>
<comment type="pathway">
    <text evidence="1">Protein biosynthesis; polypeptide chain elongation.</text>
</comment>
<comment type="subcellular location">
    <subcellularLocation>
        <location evidence="1">Mitochondrion</location>
    </subcellularLocation>
</comment>
<comment type="similarity">
    <text evidence="2">Belongs to the TRAFAC class translation factor GTPase superfamily. Classic translation factor GTPase family. EF-G/EF-2 subfamily.</text>
</comment>
<proteinExistence type="inferred from homology"/>
<protein>
    <recommendedName>
        <fullName evidence="1">Elongation factor G, mitochondrial</fullName>
        <shortName evidence="1">EF-Gmt</shortName>
    </recommendedName>
    <alternativeName>
        <fullName evidence="1">Elongation factor G 1, mitochondrial</fullName>
        <shortName evidence="1">mEF-G 1</shortName>
    </alternativeName>
    <alternativeName>
        <fullName evidence="1">Elongation factor G1</fullName>
    </alternativeName>
</protein>
<name>EFGM_EREGS</name>
<organism>
    <name type="scientific">Eremothecium gossypii (strain ATCC 10895 / CBS 109.51 / FGSC 9923 / NRRL Y-1056)</name>
    <name type="common">Yeast</name>
    <name type="synonym">Ashbya gossypii</name>
    <dbReference type="NCBI Taxonomy" id="284811"/>
    <lineage>
        <taxon>Eukaryota</taxon>
        <taxon>Fungi</taxon>
        <taxon>Dikarya</taxon>
        <taxon>Ascomycota</taxon>
        <taxon>Saccharomycotina</taxon>
        <taxon>Saccharomycetes</taxon>
        <taxon>Saccharomycetales</taxon>
        <taxon>Saccharomycetaceae</taxon>
        <taxon>Eremothecium</taxon>
    </lineage>
</organism>